<comment type="function">
    <text evidence="1">Involved in the gluconeogenesis. Catalyzes stereospecifically the conversion of dihydroxyacetone phosphate (DHAP) to D-glyceraldehyde-3-phosphate (G3P).</text>
</comment>
<comment type="catalytic activity">
    <reaction evidence="1">
        <text>D-glyceraldehyde 3-phosphate = dihydroxyacetone phosphate</text>
        <dbReference type="Rhea" id="RHEA:18585"/>
        <dbReference type="ChEBI" id="CHEBI:57642"/>
        <dbReference type="ChEBI" id="CHEBI:59776"/>
        <dbReference type="EC" id="5.3.1.1"/>
    </reaction>
</comment>
<comment type="pathway">
    <text evidence="1">Carbohydrate biosynthesis; gluconeogenesis.</text>
</comment>
<comment type="pathway">
    <text evidence="1">Carbohydrate degradation; glycolysis; D-glyceraldehyde 3-phosphate from glycerone phosphate: step 1/1.</text>
</comment>
<comment type="subunit">
    <text evidence="1">Homodimer.</text>
</comment>
<comment type="subcellular location">
    <subcellularLocation>
        <location evidence="1">Cytoplasm</location>
    </subcellularLocation>
</comment>
<comment type="similarity">
    <text evidence="1">Belongs to the triosephosphate isomerase family.</text>
</comment>
<accession>Q4A8R0</accession>
<sequence length="242" mass="26696">MKKIIIGNWKMNKTVSETRDFIQKFDIFYQENVGKIKEDLDFAIAPSFISLSLISKSLTKKLEIAAQNLSQFDSGAFTGEISGKMLQDLGTKYVIIGHSERREIFKEKDEELKNKILQAQKYDLIPVFCVGESLLEFEAGLTKKVIISQINAIKSVLNFQKAIIAYEPIWAIGTGKTATAAIAEKVCGMIKENFGKDTTVIYGGSVNSKNINELVSQKSIDGALVGGASLDPEEFGKILVNS</sequence>
<organism>
    <name type="scientific">Mesomycoplasma hyopneumoniae (strain 7448)</name>
    <name type="common">Mycoplasma hyopneumoniae</name>
    <dbReference type="NCBI Taxonomy" id="262722"/>
    <lineage>
        <taxon>Bacteria</taxon>
        <taxon>Bacillati</taxon>
        <taxon>Mycoplasmatota</taxon>
        <taxon>Mycoplasmoidales</taxon>
        <taxon>Metamycoplasmataceae</taxon>
        <taxon>Mesomycoplasma</taxon>
    </lineage>
</organism>
<name>TPIS_MESH7</name>
<feature type="chain" id="PRO_0000307511" description="Triosephosphate isomerase">
    <location>
        <begin position="1"/>
        <end position="242"/>
    </location>
</feature>
<feature type="active site" description="Electrophile" evidence="1">
    <location>
        <position position="98"/>
    </location>
</feature>
<feature type="active site" description="Proton acceptor" evidence="1">
    <location>
        <position position="167"/>
    </location>
</feature>
<feature type="binding site" evidence="1">
    <location>
        <begin position="8"/>
        <end position="10"/>
    </location>
    <ligand>
        <name>substrate</name>
    </ligand>
</feature>
<feature type="binding site" evidence="1">
    <location>
        <position position="173"/>
    </location>
    <ligand>
        <name>substrate</name>
    </ligand>
</feature>
<feature type="binding site" evidence="1">
    <location>
        <position position="205"/>
    </location>
    <ligand>
        <name>substrate</name>
    </ligand>
</feature>
<feature type="binding site" evidence="1">
    <location>
        <begin position="226"/>
        <end position="227"/>
    </location>
    <ligand>
        <name>substrate</name>
    </ligand>
</feature>
<evidence type="ECO:0000255" key="1">
    <source>
        <dbReference type="HAMAP-Rule" id="MF_00147"/>
    </source>
</evidence>
<dbReference type="EC" id="5.3.1.1" evidence="1"/>
<dbReference type="EMBL" id="AE017244">
    <property type="protein sequence ID" value="AAZ53479.1"/>
    <property type="molecule type" value="Genomic_DNA"/>
</dbReference>
<dbReference type="RefSeq" id="WP_011290009.1">
    <property type="nucleotide sequence ID" value="NC_007332.1"/>
</dbReference>
<dbReference type="SMR" id="Q4A8R0"/>
<dbReference type="KEGG" id="mhp:MHP7448_0102"/>
<dbReference type="HOGENOM" id="CLU_024251_2_3_14"/>
<dbReference type="UniPathway" id="UPA00109">
    <property type="reaction ID" value="UER00189"/>
</dbReference>
<dbReference type="UniPathway" id="UPA00138"/>
<dbReference type="Proteomes" id="UP000000553">
    <property type="component" value="Chromosome"/>
</dbReference>
<dbReference type="GO" id="GO:0005829">
    <property type="term" value="C:cytosol"/>
    <property type="evidence" value="ECO:0007669"/>
    <property type="project" value="TreeGrafter"/>
</dbReference>
<dbReference type="GO" id="GO:0004807">
    <property type="term" value="F:triose-phosphate isomerase activity"/>
    <property type="evidence" value="ECO:0007669"/>
    <property type="project" value="UniProtKB-UniRule"/>
</dbReference>
<dbReference type="GO" id="GO:0006094">
    <property type="term" value="P:gluconeogenesis"/>
    <property type="evidence" value="ECO:0007669"/>
    <property type="project" value="UniProtKB-UniRule"/>
</dbReference>
<dbReference type="GO" id="GO:0046166">
    <property type="term" value="P:glyceraldehyde-3-phosphate biosynthetic process"/>
    <property type="evidence" value="ECO:0007669"/>
    <property type="project" value="TreeGrafter"/>
</dbReference>
<dbReference type="GO" id="GO:0019563">
    <property type="term" value="P:glycerol catabolic process"/>
    <property type="evidence" value="ECO:0007669"/>
    <property type="project" value="TreeGrafter"/>
</dbReference>
<dbReference type="GO" id="GO:0006096">
    <property type="term" value="P:glycolytic process"/>
    <property type="evidence" value="ECO:0007669"/>
    <property type="project" value="UniProtKB-UniRule"/>
</dbReference>
<dbReference type="CDD" id="cd00311">
    <property type="entry name" value="TIM"/>
    <property type="match status" value="1"/>
</dbReference>
<dbReference type="FunFam" id="3.20.20.70:FF:000016">
    <property type="entry name" value="Triosephosphate isomerase"/>
    <property type="match status" value="1"/>
</dbReference>
<dbReference type="Gene3D" id="3.20.20.70">
    <property type="entry name" value="Aldolase class I"/>
    <property type="match status" value="1"/>
</dbReference>
<dbReference type="HAMAP" id="MF_00147_B">
    <property type="entry name" value="TIM_B"/>
    <property type="match status" value="1"/>
</dbReference>
<dbReference type="InterPro" id="IPR013785">
    <property type="entry name" value="Aldolase_TIM"/>
</dbReference>
<dbReference type="InterPro" id="IPR035990">
    <property type="entry name" value="TIM_sf"/>
</dbReference>
<dbReference type="InterPro" id="IPR022896">
    <property type="entry name" value="TrioseP_Isoase_bac/euk"/>
</dbReference>
<dbReference type="InterPro" id="IPR000652">
    <property type="entry name" value="Triosephosphate_isomerase"/>
</dbReference>
<dbReference type="InterPro" id="IPR020861">
    <property type="entry name" value="Triosephosphate_isomerase_AS"/>
</dbReference>
<dbReference type="NCBIfam" id="TIGR00419">
    <property type="entry name" value="tim"/>
    <property type="match status" value="1"/>
</dbReference>
<dbReference type="PANTHER" id="PTHR21139">
    <property type="entry name" value="TRIOSEPHOSPHATE ISOMERASE"/>
    <property type="match status" value="1"/>
</dbReference>
<dbReference type="PANTHER" id="PTHR21139:SF42">
    <property type="entry name" value="TRIOSEPHOSPHATE ISOMERASE"/>
    <property type="match status" value="1"/>
</dbReference>
<dbReference type="Pfam" id="PF00121">
    <property type="entry name" value="TIM"/>
    <property type="match status" value="1"/>
</dbReference>
<dbReference type="SUPFAM" id="SSF51351">
    <property type="entry name" value="Triosephosphate isomerase (TIM)"/>
    <property type="match status" value="1"/>
</dbReference>
<dbReference type="PROSITE" id="PS00171">
    <property type="entry name" value="TIM_1"/>
    <property type="match status" value="1"/>
</dbReference>
<dbReference type="PROSITE" id="PS51440">
    <property type="entry name" value="TIM_2"/>
    <property type="match status" value="1"/>
</dbReference>
<reference key="1">
    <citation type="journal article" date="2005" name="J. Bacteriol.">
        <title>Swine and poultry pathogens: the complete genome sequences of two strains of Mycoplasma hyopneumoniae and a strain of Mycoplasma synoviae.</title>
        <authorList>
            <person name="Vasconcelos A.T.R."/>
            <person name="Ferreira H.B."/>
            <person name="Bizarro C.V."/>
            <person name="Bonatto S.L."/>
            <person name="Carvalho M.O."/>
            <person name="Pinto P.M."/>
            <person name="Almeida D.F."/>
            <person name="Almeida L.G.P."/>
            <person name="Almeida R."/>
            <person name="Alves-Junior L."/>
            <person name="Assuncao E.N."/>
            <person name="Azevedo V.A.C."/>
            <person name="Bogo M.R."/>
            <person name="Brigido M.M."/>
            <person name="Brocchi M."/>
            <person name="Burity H.A."/>
            <person name="Camargo A.A."/>
            <person name="Camargo S.S."/>
            <person name="Carepo M.S."/>
            <person name="Carraro D.M."/>
            <person name="de Mattos Cascardo J.C."/>
            <person name="Castro L.A."/>
            <person name="Cavalcanti G."/>
            <person name="Chemale G."/>
            <person name="Collevatti R.G."/>
            <person name="Cunha C.W."/>
            <person name="Dallagiovanna B."/>
            <person name="Dambros B.P."/>
            <person name="Dellagostin O.A."/>
            <person name="Falcao C."/>
            <person name="Fantinatti-Garboggini F."/>
            <person name="Felipe M.S.S."/>
            <person name="Fiorentin L."/>
            <person name="Franco G.R."/>
            <person name="Freitas N.S.A."/>
            <person name="Frias D."/>
            <person name="Grangeiro T.B."/>
            <person name="Grisard E.C."/>
            <person name="Guimaraes C.T."/>
            <person name="Hungria M."/>
            <person name="Jardim S.N."/>
            <person name="Krieger M.A."/>
            <person name="Laurino J.P."/>
            <person name="Lima L.F.A."/>
            <person name="Lopes M.I."/>
            <person name="Loreto E.L.S."/>
            <person name="Madeira H.M.F."/>
            <person name="Manfio G.P."/>
            <person name="Maranhao A.Q."/>
            <person name="Martinkovics C.T."/>
            <person name="Medeiros S.R.B."/>
            <person name="Moreira M.A.M."/>
            <person name="Neiva M."/>
            <person name="Ramalho-Neto C.E."/>
            <person name="Nicolas M.F."/>
            <person name="Oliveira S.C."/>
            <person name="Paixao R.F.C."/>
            <person name="Pedrosa F.O."/>
            <person name="Pena S.D.J."/>
            <person name="Pereira M."/>
            <person name="Pereira-Ferrari L."/>
            <person name="Piffer I."/>
            <person name="Pinto L.S."/>
            <person name="Potrich D.P."/>
            <person name="Salim A.C.M."/>
            <person name="Santos F.R."/>
            <person name="Schmitt R."/>
            <person name="Schneider M.P.C."/>
            <person name="Schrank A."/>
            <person name="Schrank I.S."/>
            <person name="Schuck A.F."/>
            <person name="Seuanez H.N."/>
            <person name="Silva D.W."/>
            <person name="Silva R."/>
            <person name="Silva S.C."/>
            <person name="Soares C.M.A."/>
            <person name="Souza K.R.L."/>
            <person name="Souza R.C."/>
            <person name="Staats C.C."/>
            <person name="Steffens M.B.R."/>
            <person name="Teixeira S.M.R."/>
            <person name="Urmenyi T.P."/>
            <person name="Vainstein M.H."/>
            <person name="Zuccherato L.W."/>
            <person name="Simpson A.J.G."/>
            <person name="Zaha A."/>
        </authorList>
    </citation>
    <scope>NUCLEOTIDE SEQUENCE [LARGE SCALE GENOMIC DNA]</scope>
    <source>
        <strain>7448</strain>
    </source>
</reference>
<proteinExistence type="inferred from homology"/>
<keyword id="KW-0963">Cytoplasm</keyword>
<keyword id="KW-0312">Gluconeogenesis</keyword>
<keyword id="KW-0324">Glycolysis</keyword>
<keyword id="KW-0413">Isomerase</keyword>
<protein>
    <recommendedName>
        <fullName evidence="1">Triosephosphate isomerase</fullName>
        <shortName evidence="1">TIM</shortName>
        <shortName evidence="1">TPI</shortName>
        <ecNumber evidence="1">5.3.1.1</ecNumber>
    </recommendedName>
    <alternativeName>
        <fullName evidence="1">Triose-phosphate isomerase</fullName>
    </alternativeName>
</protein>
<gene>
    <name evidence="1" type="primary">tpiA</name>
    <name type="ordered locus">MHP7448_0102</name>
</gene>